<keyword id="KW-0002">3D-structure</keyword>
<keyword id="KW-0007">Acetylation</keyword>
<keyword id="KW-0025">Alternative splicing</keyword>
<keyword id="KW-0963">Cytoplasm</keyword>
<keyword id="KW-1017">Isopeptide bond</keyword>
<keyword id="KW-0488">Methylation</keyword>
<keyword id="KW-0539">Nucleus</keyword>
<keyword id="KW-0597">Phosphoprotein</keyword>
<keyword id="KW-1185">Reference proteome</keyword>
<keyword id="KW-0694">RNA-binding</keyword>
<keyword id="KW-0810">Translation regulation</keyword>
<keyword id="KW-0832">Ubl conjugation</keyword>
<reference key="1">
    <citation type="journal article" date="2005" name="Science">
        <title>The transcriptional landscape of the mammalian genome.</title>
        <authorList>
            <person name="Carninci P."/>
            <person name="Kasukawa T."/>
            <person name="Katayama S."/>
            <person name="Gough J."/>
            <person name="Frith M.C."/>
            <person name="Maeda N."/>
            <person name="Oyama R."/>
            <person name="Ravasi T."/>
            <person name="Lenhard B."/>
            <person name="Wells C."/>
            <person name="Kodzius R."/>
            <person name="Shimokawa K."/>
            <person name="Bajic V.B."/>
            <person name="Brenner S.E."/>
            <person name="Batalov S."/>
            <person name="Forrest A.R."/>
            <person name="Zavolan M."/>
            <person name="Davis M.J."/>
            <person name="Wilming L.G."/>
            <person name="Aidinis V."/>
            <person name="Allen J.E."/>
            <person name="Ambesi-Impiombato A."/>
            <person name="Apweiler R."/>
            <person name="Aturaliya R.N."/>
            <person name="Bailey T.L."/>
            <person name="Bansal M."/>
            <person name="Baxter L."/>
            <person name="Beisel K.W."/>
            <person name="Bersano T."/>
            <person name="Bono H."/>
            <person name="Chalk A.M."/>
            <person name="Chiu K.P."/>
            <person name="Choudhary V."/>
            <person name="Christoffels A."/>
            <person name="Clutterbuck D.R."/>
            <person name="Crowe M.L."/>
            <person name="Dalla E."/>
            <person name="Dalrymple B.P."/>
            <person name="de Bono B."/>
            <person name="Della Gatta G."/>
            <person name="di Bernardo D."/>
            <person name="Down T."/>
            <person name="Engstrom P."/>
            <person name="Fagiolini M."/>
            <person name="Faulkner G."/>
            <person name="Fletcher C.F."/>
            <person name="Fukushima T."/>
            <person name="Furuno M."/>
            <person name="Futaki S."/>
            <person name="Gariboldi M."/>
            <person name="Georgii-Hemming P."/>
            <person name="Gingeras T.R."/>
            <person name="Gojobori T."/>
            <person name="Green R.E."/>
            <person name="Gustincich S."/>
            <person name="Harbers M."/>
            <person name="Hayashi Y."/>
            <person name="Hensch T.K."/>
            <person name="Hirokawa N."/>
            <person name="Hill D."/>
            <person name="Huminiecki L."/>
            <person name="Iacono M."/>
            <person name="Ikeo K."/>
            <person name="Iwama A."/>
            <person name="Ishikawa T."/>
            <person name="Jakt M."/>
            <person name="Kanapin A."/>
            <person name="Katoh M."/>
            <person name="Kawasawa Y."/>
            <person name="Kelso J."/>
            <person name="Kitamura H."/>
            <person name="Kitano H."/>
            <person name="Kollias G."/>
            <person name="Krishnan S.P."/>
            <person name="Kruger A."/>
            <person name="Kummerfeld S.K."/>
            <person name="Kurochkin I.V."/>
            <person name="Lareau L.F."/>
            <person name="Lazarevic D."/>
            <person name="Lipovich L."/>
            <person name="Liu J."/>
            <person name="Liuni S."/>
            <person name="McWilliam S."/>
            <person name="Madan Babu M."/>
            <person name="Madera M."/>
            <person name="Marchionni L."/>
            <person name="Matsuda H."/>
            <person name="Matsuzawa S."/>
            <person name="Miki H."/>
            <person name="Mignone F."/>
            <person name="Miyake S."/>
            <person name="Morris K."/>
            <person name="Mottagui-Tabar S."/>
            <person name="Mulder N."/>
            <person name="Nakano N."/>
            <person name="Nakauchi H."/>
            <person name="Ng P."/>
            <person name="Nilsson R."/>
            <person name="Nishiguchi S."/>
            <person name="Nishikawa S."/>
            <person name="Nori F."/>
            <person name="Ohara O."/>
            <person name="Okazaki Y."/>
            <person name="Orlando V."/>
            <person name="Pang K.C."/>
            <person name="Pavan W.J."/>
            <person name="Pavesi G."/>
            <person name="Pesole G."/>
            <person name="Petrovsky N."/>
            <person name="Piazza S."/>
            <person name="Reed J."/>
            <person name="Reid J.F."/>
            <person name="Ring B.Z."/>
            <person name="Ringwald M."/>
            <person name="Rost B."/>
            <person name="Ruan Y."/>
            <person name="Salzberg S.L."/>
            <person name="Sandelin A."/>
            <person name="Schneider C."/>
            <person name="Schoenbach C."/>
            <person name="Sekiguchi K."/>
            <person name="Semple C.A."/>
            <person name="Seno S."/>
            <person name="Sessa L."/>
            <person name="Sheng Y."/>
            <person name="Shibata Y."/>
            <person name="Shimada H."/>
            <person name="Shimada K."/>
            <person name="Silva D."/>
            <person name="Sinclair B."/>
            <person name="Sperling S."/>
            <person name="Stupka E."/>
            <person name="Sugiura K."/>
            <person name="Sultana R."/>
            <person name="Takenaka Y."/>
            <person name="Taki K."/>
            <person name="Tammoja K."/>
            <person name="Tan S.L."/>
            <person name="Tang S."/>
            <person name="Taylor M.S."/>
            <person name="Tegner J."/>
            <person name="Teichmann S.A."/>
            <person name="Ueda H.R."/>
            <person name="van Nimwegen E."/>
            <person name="Verardo R."/>
            <person name="Wei C.L."/>
            <person name="Yagi K."/>
            <person name="Yamanishi H."/>
            <person name="Zabarovsky E."/>
            <person name="Zhu S."/>
            <person name="Zimmer A."/>
            <person name="Hide W."/>
            <person name="Bult C."/>
            <person name="Grimmond S.M."/>
            <person name="Teasdale R.D."/>
            <person name="Liu E.T."/>
            <person name="Brusic V."/>
            <person name="Quackenbush J."/>
            <person name="Wahlestedt C."/>
            <person name="Mattick J.S."/>
            <person name="Hume D.A."/>
            <person name="Kai C."/>
            <person name="Sasaki D."/>
            <person name="Tomaru Y."/>
            <person name="Fukuda S."/>
            <person name="Kanamori-Katayama M."/>
            <person name="Suzuki M."/>
            <person name="Aoki J."/>
            <person name="Arakawa T."/>
            <person name="Iida J."/>
            <person name="Imamura K."/>
            <person name="Itoh M."/>
            <person name="Kato T."/>
            <person name="Kawaji H."/>
            <person name="Kawagashira N."/>
            <person name="Kawashima T."/>
            <person name="Kojima M."/>
            <person name="Kondo S."/>
            <person name="Konno H."/>
            <person name="Nakano K."/>
            <person name="Ninomiya N."/>
            <person name="Nishio T."/>
            <person name="Okada M."/>
            <person name="Plessy C."/>
            <person name="Shibata K."/>
            <person name="Shiraki T."/>
            <person name="Suzuki S."/>
            <person name="Tagami M."/>
            <person name="Waki K."/>
            <person name="Watahiki A."/>
            <person name="Okamura-Oho Y."/>
            <person name="Suzuki H."/>
            <person name="Kawai J."/>
            <person name="Hayashizaki Y."/>
        </authorList>
    </citation>
    <scope>NUCLEOTIDE SEQUENCE [LARGE SCALE MRNA] (ISOFORMS 1; 2; 3 AND 4)</scope>
    <source>
        <strain>C57BL/6J</strain>
        <strain>NOD</strain>
        <tissue>Embryo</tissue>
        <tissue>Embryonic liver</tissue>
        <tissue>Lung</tissue>
        <tissue>Thymus</tissue>
    </source>
</reference>
<reference key="2">
    <citation type="journal article" date="2004" name="Genome Res.">
        <title>The status, quality, and expansion of the NIH full-length cDNA project: the Mammalian Gene Collection (MGC).</title>
        <authorList>
            <consortium name="The MGC Project Team"/>
        </authorList>
    </citation>
    <scope>NUCLEOTIDE SEQUENCE [LARGE SCALE MRNA] (ISOFORM 3)</scope>
    <source>
        <strain>FVB/N</strain>
        <tissue>Eye</tissue>
        <tissue>Salivary gland</tissue>
    </source>
</reference>
<reference key="3">
    <citation type="journal article" date="2004" name="Mol. Cell. Proteomics">
        <title>Phosphoproteomic analysis of the developing mouse brain.</title>
        <authorList>
            <person name="Ballif B.A."/>
            <person name="Villen J."/>
            <person name="Beausoleil S.A."/>
            <person name="Schwartz D."/>
            <person name="Gygi S.P."/>
        </authorList>
    </citation>
    <scope>PHOSPHORYLATION [LARGE SCALE ANALYSIS] AT SER-25</scope>
    <scope>IDENTIFICATION BY MASS SPECTROMETRY [LARGE SCALE ANALYSIS]</scope>
    <source>
        <tissue>Embryonic brain</tissue>
    </source>
</reference>
<reference key="4">
    <citation type="journal article" date="2007" name="Proc. Natl. Acad. Sci. U.S.A.">
        <title>Large-scale phosphorylation analysis of mouse liver.</title>
        <authorList>
            <person name="Villen J."/>
            <person name="Beausoleil S.A."/>
            <person name="Gerber S.A."/>
            <person name="Gygi S.P."/>
        </authorList>
    </citation>
    <scope>IDENTIFICATION BY MASS SPECTROMETRY [LARGE SCALE ANALYSIS]</scope>
    <source>
        <tissue>Liver</tissue>
    </source>
</reference>
<reference key="5">
    <citation type="journal article" date="2009" name="Immunity">
        <title>The phagosomal proteome in interferon-gamma-activated macrophages.</title>
        <authorList>
            <person name="Trost M."/>
            <person name="English L."/>
            <person name="Lemieux S."/>
            <person name="Courcelles M."/>
            <person name="Desjardins M."/>
            <person name="Thibault P."/>
        </authorList>
    </citation>
    <scope>PHOSPHORYLATION [LARGE SCALE ANALYSIS] AT SER-25</scope>
    <scope>IDENTIFICATION BY MASS SPECTROMETRY [LARGE SCALE ANALYSIS]</scope>
</reference>
<reference key="6">
    <citation type="journal article" date="2009" name="Mol. Cell. Proteomics">
        <title>Large scale localization of protein phosphorylation by use of electron capture dissociation mass spectrometry.</title>
        <authorList>
            <person name="Sweet S.M."/>
            <person name="Bailey C.M."/>
            <person name="Cunningham D.L."/>
            <person name="Heath J.K."/>
            <person name="Cooper H.J."/>
        </authorList>
    </citation>
    <scope>PHOSPHORYLATION [LARGE SCALE ANALYSIS] AT SER-329</scope>
    <scope>IDENTIFICATION BY MASS SPECTROMETRY [LARGE SCALE ANALYSIS]</scope>
    <source>
        <tissue>Embryonic fibroblast</tissue>
    </source>
</reference>
<reference key="7">
    <citation type="journal article" date="2010" name="Cell">
        <title>A tissue-specific atlas of mouse protein phosphorylation and expression.</title>
        <authorList>
            <person name="Huttlin E.L."/>
            <person name="Jedrychowski M.P."/>
            <person name="Elias J.E."/>
            <person name="Goswami T."/>
            <person name="Rad R."/>
            <person name="Beausoleil S.A."/>
            <person name="Villen J."/>
            <person name="Haas W."/>
            <person name="Sowa M.E."/>
            <person name="Gygi S.P."/>
        </authorList>
    </citation>
    <scope>PHOSPHORYLATION [LARGE SCALE ANALYSIS] AT SER-25; SER-234; SER-329 AND SER-391</scope>
    <scope>PHOSPHORYLATION [LARGE SCALE ANALYSIS] AT SER-237 AND THR-240 (ISOFORM 2)</scope>
    <scope>PHOSPHORYLATION [LARGE SCALE ANALYSIS] AT SER-231 AND THR-234 (ISOFORM 3)</scope>
    <scope>IDENTIFICATION BY MASS SPECTROMETRY [LARGE SCALE ANALYSIS]</scope>
    <source>
        <tissue>Brain</tissue>
        <tissue>Brown adipose tissue</tissue>
        <tissue>Heart</tissue>
        <tissue>Kidney</tissue>
        <tissue>Liver</tissue>
        <tissue>Lung</tissue>
        <tissue>Pancreas</tissue>
        <tissue>Spleen</tissue>
        <tissue>Testis</tissue>
    </source>
</reference>
<reference key="8">
    <citation type="journal article" date="2013" name="Mol. Cell">
        <title>SIRT5-mediated lysine desuccinylation impacts diverse metabolic pathways.</title>
        <authorList>
            <person name="Park J."/>
            <person name="Chen Y."/>
            <person name="Tishkoff D.X."/>
            <person name="Peng C."/>
            <person name="Tan M."/>
            <person name="Dai L."/>
            <person name="Xie Z."/>
            <person name="Zhang Y."/>
            <person name="Zwaans B.M."/>
            <person name="Skinner M.E."/>
            <person name="Lombard D.B."/>
            <person name="Zhao Y."/>
        </authorList>
    </citation>
    <scope>ACETYLATION [LARGE SCALE ANALYSIS] AT LYS-52; LYS-122 AND LYS-328</scope>
    <scope>IDENTIFICATION BY MASS SPECTROMETRY [LARGE SCALE ANALYSIS]</scope>
    <source>
        <tissue>Embryonic fibroblast</tissue>
    </source>
</reference>
<reference key="9">
    <citation type="journal article" date="2013" name="PLoS ONE">
        <title>A tudor domain protein SPINDLIN1 interacts with the mRNA-binding protein SERBP1 and is involved in mouse oocyte meiotic resumption.</title>
        <authorList>
            <person name="Chew T.G."/>
            <person name="Peaston A."/>
            <person name="Lim A.K."/>
            <person name="Lorthongpanich C."/>
            <person name="Knowles B.B."/>
            <person name="Solter D."/>
        </authorList>
    </citation>
    <scope>INTERACTION WITH SPIN1</scope>
</reference>
<reference key="10">
    <citation type="journal article" date="2014" name="Mol. Cell. Proteomics">
        <title>Immunoaffinity enrichment and mass spectrometry analysis of protein methylation.</title>
        <authorList>
            <person name="Guo A."/>
            <person name="Gu H."/>
            <person name="Zhou J."/>
            <person name="Mulhern D."/>
            <person name="Wang Y."/>
            <person name="Lee K.A."/>
            <person name="Yang V."/>
            <person name="Aguiar M."/>
            <person name="Kornhauser J."/>
            <person name="Jia X."/>
            <person name="Ren J."/>
            <person name="Beausoleil S.A."/>
            <person name="Silva J.C."/>
            <person name="Vemulapalli V."/>
            <person name="Bedford M.T."/>
            <person name="Comb M.J."/>
        </authorList>
    </citation>
    <scope>METHYLATION [LARGE SCALE ANALYSIS] AT ARG-165; ARG-188; ARG-216; ARG-363; ARG-366 AND ARG-369</scope>
    <scope>IDENTIFICATION BY MASS SPECTROMETRY [LARGE SCALE ANALYSIS]</scope>
    <source>
        <tissue>Brain</tissue>
        <tissue>Embryo</tissue>
    </source>
</reference>
<reference evidence="11 12" key="11">
    <citation type="journal article" date="2021" name="Nat. Commun.">
        <title>Functionally distinct roles for eEF2K in the control of ribosome availability and p-body abundance.</title>
        <authorList>
            <person name="Smith P.R."/>
            <person name="Loerch S."/>
            <person name="Kunder N."/>
            <person name="Stanowick A.D."/>
            <person name="Lou T.F."/>
            <person name="Campbell Z.T."/>
        </authorList>
    </citation>
    <scope>STRUCTURE BY ELECTRON MICROSCOPY (3.10 ANGSTROMS) IN COMPLEX WITH RIBOSOME AND EEF2</scope>
    <scope>FUNCTION</scope>
    <scope>INTERACTION WITH EEF2</scope>
</reference>
<feature type="chain" id="PRO_0000058183" description="SERPINE1 mRNA-binding protein 1">
    <location>
        <begin position="1"/>
        <end position="407"/>
    </location>
</feature>
<feature type="region of interest" description="Disordered" evidence="3">
    <location>
        <begin position="33"/>
        <end position="227"/>
    </location>
</feature>
<feature type="region of interest" description="Disordered" evidence="3">
    <location>
        <begin position="242"/>
        <end position="288"/>
    </location>
</feature>
<feature type="region of interest" description="Disordered" evidence="3">
    <location>
        <begin position="327"/>
        <end position="407"/>
    </location>
</feature>
<feature type="compositionally biased region" description="Low complexity" evidence="3">
    <location>
        <begin position="51"/>
        <end position="68"/>
    </location>
</feature>
<feature type="compositionally biased region" description="Basic and acidic residues" evidence="3">
    <location>
        <begin position="70"/>
        <end position="80"/>
    </location>
</feature>
<feature type="compositionally biased region" description="Basic and acidic residues" evidence="3">
    <location>
        <begin position="89"/>
        <end position="114"/>
    </location>
</feature>
<feature type="compositionally biased region" description="Basic and acidic residues" evidence="3">
    <location>
        <begin position="122"/>
        <end position="162"/>
    </location>
</feature>
<feature type="compositionally biased region" description="Gly residues" evidence="3">
    <location>
        <begin position="164"/>
        <end position="182"/>
    </location>
</feature>
<feature type="compositionally biased region" description="Basic and acidic residues" evidence="3">
    <location>
        <begin position="183"/>
        <end position="199"/>
    </location>
</feature>
<feature type="compositionally biased region" description="Polar residues" evidence="3">
    <location>
        <begin position="242"/>
        <end position="256"/>
    </location>
</feature>
<feature type="compositionally biased region" description="Basic and acidic residues" evidence="3">
    <location>
        <begin position="261"/>
        <end position="274"/>
    </location>
</feature>
<feature type="compositionally biased region" description="Basic and acidic residues" evidence="3">
    <location>
        <begin position="327"/>
        <end position="341"/>
    </location>
</feature>
<feature type="compositionally biased region" description="Gly residues" evidence="3">
    <location>
        <begin position="362"/>
        <end position="371"/>
    </location>
</feature>
<feature type="modified residue" description="Phosphoserine" evidence="13 15 16">
    <location>
        <position position="25"/>
    </location>
</feature>
<feature type="modified residue" description="N6-acetyllysine; alternate" evidence="17">
    <location>
        <position position="52"/>
    </location>
</feature>
<feature type="modified residue" description="N6-acetyllysine" evidence="2">
    <location>
        <position position="68"/>
    </location>
</feature>
<feature type="modified residue" description="N6-acetyllysine" evidence="17">
    <location>
        <position position="122"/>
    </location>
</feature>
<feature type="modified residue" description="N6-acetyllysine" evidence="2">
    <location>
        <position position="140"/>
    </location>
</feature>
<feature type="modified residue" description="Omega-N-methylarginine" evidence="18">
    <location>
        <position position="165"/>
    </location>
</feature>
<feature type="modified residue" description="Omega-N-methylarginine" evidence="18">
    <location>
        <position position="188"/>
    </location>
</feature>
<feature type="modified residue" description="Phosphoserine" evidence="1">
    <location>
        <position position="197"/>
    </location>
</feature>
<feature type="modified residue" description="Phosphoserine" evidence="2">
    <location>
        <position position="199"/>
    </location>
</feature>
<feature type="modified residue" description="Phosphoserine" evidence="2">
    <location>
        <position position="203"/>
    </location>
</feature>
<feature type="modified residue" description="Phosphoserine" evidence="2">
    <location>
        <position position="205"/>
    </location>
</feature>
<feature type="modified residue" description="Phosphoserine" evidence="2">
    <location>
        <position position="208"/>
    </location>
</feature>
<feature type="modified residue" description="N6-acetyllysine; alternate" evidence="2">
    <location>
        <position position="211"/>
    </location>
</feature>
<feature type="modified residue" description="Omega-N-methylarginine" evidence="18">
    <location>
        <position position="216"/>
    </location>
</feature>
<feature type="modified residue" description="Phosphoserine" evidence="2">
    <location>
        <position position="221"/>
    </location>
</feature>
<feature type="modified residue" description="Phosphothreonine" evidence="2">
    <location>
        <position position="226"/>
    </location>
</feature>
<feature type="modified residue" description="Phosphoserine" evidence="16">
    <location>
        <position position="234"/>
    </location>
</feature>
<feature type="modified residue" description="N6-acetyllysine" evidence="17">
    <location>
        <position position="328"/>
    </location>
</feature>
<feature type="modified residue" description="Phosphoserine" evidence="14 16">
    <location>
        <position position="329"/>
    </location>
</feature>
<feature type="modified residue" description="Omega-N-methylarginine" evidence="18">
    <location>
        <position position="363"/>
    </location>
</feature>
<feature type="modified residue" description="Omega-N-methylarginine" evidence="18">
    <location>
        <position position="366"/>
    </location>
</feature>
<feature type="modified residue" description="Omega-N-methylarginine" evidence="18">
    <location>
        <position position="369"/>
    </location>
</feature>
<feature type="modified residue" description="Phosphoserine" evidence="16">
    <location>
        <position position="391"/>
    </location>
</feature>
<feature type="modified residue" description="Phosphoserine" evidence="2">
    <location>
        <position position="393"/>
    </location>
</feature>
<feature type="cross-link" description="Glycyl lysine isopeptide (Lys-Gly) (interchain with G-Cter in SUMO1); alternate" evidence="2">
    <location>
        <position position="52"/>
    </location>
</feature>
<feature type="cross-link" description="Glycyl lysine isopeptide (Lys-Gly) (interchain with G-Cter in SUMO2)" evidence="2">
    <location>
        <position position="102"/>
    </location>
</feature>
<feature type="cross-link" description="Glycyl lysine isopeptide (Lys-Gly) (interchain with G-Cter in SUMO2); alternate" evidence="2">
    <location>
        <position position="211"/>
    </location>
</feature>
<feature type="cross-link" description="Glycyl lysine isopeptide (Lys-Gly) (interchain with G-Cter in SUMO1); alternate" evidence="2">
    <location>
        <position position="228"/>
    </location>
</feature>
<feature type="cross-link" description="Glycyl lysine isopeptide (Lys-Gly) (interchain with G-Cter in SUMO2); alternate" evidence="2">
    <location>
        <position position="228"/>
    </location>
</feature>
<feature type="cross-link" description="Glycyl lysine isopeptide (Lys-Gly) (interchain with G-Cter in SUMO2)" evidence="2">
    <location>
        <position position="280"/>
    </location>
</feature>
<feature type="splice variant" id="VSP_011632" description="In isoform 3." evidence="6 7">
    <location>
        <begin position="203"/>
        <end position="208"/>
    </location>
</feature>
<feature type="splice variant" id="VSP_011633" description="In isoform 2 and isoform 3." evidence="6 7">
    <location>
        <begin position="233"/>
        <end position="247"/>
    </location>
</feature>
<feature type="splice variant" id="VSP_011634" description="In isoform 4." evidence="7">
    <original>ESP</original>
    <variation>LVF</variation>
    <location>
        <begin position="233"/>
        <end position="235"/>
    </location>
</feature>
<feature type="splice variant" id="VSP_011635" description="In isoform 4." evidence="7">
    <location>
        <begin position="236"/>
        <end position="407"/>
    </location>
</feature>
<feature type="sequence conflict" description="In Ref. 1; BAC40253." evidence="9" ref="1">
    <original>L</original>
    <variation>P</variation>
    <location>
        <position position="5"/>
    </location>
</feature>
<feature type="sequence conflict" description="In Ref. 1; BAB23466." evidence="9" ref="1">
    <original>F</original>
    <variation>S</variation>
    <location>
        <position position="403"/>
    </location>
</feature>
<feature type="modified residue" description="Phosphoserine" evidence="16">
    <location sequence="Q9CY58-2">
        <position position="237"/>
    </location>
</feature>
<feature type="modified residue" description="Phosphothreonine" evidence="16">
    <location sequence="Q9CY58-2">
        <position position="240"/>
    </location>
</feature>
<feature type="modified residue" description="Phosphoserine" evidence="16">
    <location sequence="Q9CY58-3">
        <position position="231"/>
    </location>
</feature>
<feature type="modified residue" description="Phosphothreonine" evidence="16">
    <location sequence="Q9CY58-3">
        <position position="234"/>
    </location>
</feature>
<name>SERB1_MOUSE</name>
<protein>
    <recommendedName>
        <fullName>SERPINE1 mRNA-binding protein 1</fullName>
    </recommendedName>
    <alternativeName>
        <fullName>PAI1 RNA-binding protein 1</fullName>
        <shortName>PAI-RBP1</shortName>
    </alternativeName>
    <alternativeName>
        <fullName>Plasminogen activator inhibitor 1 RNA-binding protein</fullName>
    </alternativeName>
</protein>
<evidence type="ECO:0000250" key="1">
    <source>
        <dbReference type="UniProtKB" id="Q6AXS5"/>
    </source>
</evidence>
<evidence type="ECO:0000250" key="2">
    <source>
        <dbReference type="UniProtKB" id="Q8NC51"/>
    </source>
</evidence>
<evidence type="ECO:0000256" key="3">
    <source>
        <dbReference type="SAM" id="MobiDB-lite"/>
    </source>
</evidence>
<evidence type="ECO:0000269" key="4">
    <source>
    </source>
</evidence>
<evidence type="ECO:0000269" key="5">
    <source>
    </source>
</evidence>
<evidence type="ECO:0000303" key="6">
    <source>
    </source>
</evidence>
<evidence type="ECO:0000303" key="7">
    <source>
    </source>
</evidence>
<evidence type="ECO:0000303" key="8">
    <source>
    </source>
</evidence>
<evidence type="ECO:0000305" key="9"/>
<evidence type="ECO:0000312" key="10">
    <source>
        <dbReference type="MGI" id="MGI:1914120"/>
    </source>
</evidence>
<evidence type="ECO:0007744" key="11">
    <source>
        <dbReference type="PDB" id="7LS1"/>
    </source>
</evidence>
<evidence type="ECO:0007744" key="12">
    <source>
        <dbReference type="PDB" id="7LS2"/>
    </source>
</evidence>
<evidence type="ECO:0007744" key="13">
    <source>
    </source>
</evidence>
<evidence type="ECO:0007744" key="14">
    <source>
    </source>
</evidence>
<evidence type="ECO:0007744" key="15">
    <source>
    </source>
</evidence>
<evidence type="ECO:0007744" key="16">
    <source>
    </source>
</evidence>
<evidence type="ECO:0007744" key="17">
    <source>
    </source>
</evidence>
<evidence type="ECO:0007744" key="18">
    <source>
    </source>
</evidence>
<gene>
    <name evidence="8 10" type="primary">Serbp1</name>
    <name type="synonym">Pairbp1</name>
</gene>
<dbReference type="EMBL" id="AK004678">
    <property type="protein sequence ID" value="BAB23466.1"/>
    <property type="molecule type" value="mRNA"/>
</dbReference>
<dbReference type="EMBL" id="AK010860">
    <property type="protein sequence ID" value="BAB27229.1"/>
    <property type="molecule type" value="mRNA"/>
</dbReference>
<dbReference type="EMBL" id="AK012390">
    <property type="protein sequence ID" value="BAB28207.1"/>
    <property type="molecule type" value="mRNA"/>
</dbReference>
<dbReference type="EMBL" id="AK045190">
    <property type="protein sequence ID" value="BAC32255.1"/>
    <property type="molecule type" value="mRNA"/>
</dbReference>
<dbReference type="EMBL" id="AK088278">
    <property type="protein sequence ID" value="BAC40253.1"/>
    <property type="molecule type" value="mRNA"/>
</dbReference>
<dbReference type="EMBL" id="BC013665">
    <property type="protein sequence ID" value="AAH13665.1"/>
    <property type="molecule type" value="mRNA"/>
</dbReference>
<dbReference type="EMBL" id="BC030502">
    <property type="protein sequence ID" value="AAH30502.1"/>
    <property type="molecule type" value="mRNA"/>
</dbReference>
<dbReference type="CCDS" id="CCDS20219.1">
    <molecule id="Q9CY58-1"/>
</dbReference>
<dbReference type="CCDS" id="CCDS85060.1">
    <molecule id="Q9CY58-2"/>
</dbReference>
<dbReference type="CCDS" id="CCDS85062.1">
    <molecule id="Q9CY58-3"/>
</dbReference>
<dbReference type="RefSeq" id="NP_001107037.1">
    <molecule id="Q9CY58-2"/>
    <property type="nucleotide sequence ID" value="NM_001113565.1"/>
</dbReference>
<dbReference type="RefSeq" id="NP_001107038.1">
    <molecule id="Q9CY58-3"/>
    <property type="nucleotide sequence ID" value="NM_001113566.1"/>
</dbReference>
<dbReference type="RefSeq" id="NP_080090.2">
    <molecule id="Q9CY58-1"/>
    <property type="nucleotide sequence ID" value="NM_025814.2"/>
</dbReference>
<dbReference type="PDB" id="7LS1">
    <property type="method" value="EM"/>
    <property type="resolution" value="3.30 A"/>
    <property type="chains" value="A=1-407"/>
</dbReference>
<dbReference type="PDB" id="7LS2">
    <property type="method" value="EM"/>
    <property type="resolution" value="3.10 A"/>
    <property type="chains" value="A=1-407"/>
</dbReference>
<dbReference type="PDBsum" id="7LS1"/>
<dbReference type="PDBsum" id="7LS2"/>
<dbReference type="EMDB" id="EMD-23500"/>
<dbReference type="EMDB" id="EMD-23501"/>
<dbReference type="SMR" id="Q9CY58"/>
<dbReference type="BioGRID" id="211777">
    <property type="interactions" value="38"/>
</dbReference>
<dbReference type="FunCoup" id="Q9CY58">
    <property type="interactions" value="4822"/>
</dbReference>
<dbReference type="IntAct" id="Q9CY58">
    <property type="interactions" value="5"/>
</dbReference>
<dbReference type="MINT" id="Q9CY58"/>
<dbReference type="STRING" id="10090.ENSMUSP00000039110"/>
<dbReference type="GlyGen" id="Q9CY58">
    <property type="glycosylation" value="1 site, 1 O-linked glycan (1 site)"/>
</dbReference>
<dbReference type="iPTMnet" id="Q9CY58"/>
<dbReference type="PhosphoSitePlus" id="Q9CY58"/>
<dbReference type="SwissPalm" id="Q9CY58"/>
<dbReference type="jPOST" id="Q9CY58"/>
<dbReference type="PaxDb" id="10090-ENSMUSP00000039110"/>
<dbReference type="PeptideAtlas" id="Q9CY58"/>
<dbReference type="ProteomicsDB" id="287768">
    <molecule id="Q9CY58-1"/>
</dbReference>
<dbReference type="ProteomicsDB" id="287769">
    <molecule id="Q9CY58-2"/>
</dbReference>
<dbReference type="ProteomicsDB" id="287770">
    <molecule id="Q9CY58-3"/>
</dbReference>
<dbReference type="ProteomicsDB" id="287771">
    <molecule id="Q9CY58-4"/>
</dbReference>
<dbReference type="Pumba" id="Q9CY58"/>
<dbReference type="TopDownProteomics" id="Q9CY58-1">
    <molecule id="Q9CY58-1"/>
</dbReference>
<dbReference type="TopDownProteomics" id="Q9CY58-3">
    <molecule id="Q9CY58-3"/>
</dbReference>
<dbReference type="Antibodypedia" id="19619">
    <property type="antibodies" value="431 antibodies from 28 providers"/>
</dbReference>
<dbReference type="DNASU" id="66870"/>
<dbReference type="Ensembl" id="ENSMUST00000042990.7">
    <molecule id="Q9CY58-1"/>
    <property type="protein sequence ID" value="ENSMUSP00000039110.5"/>
    <property type="gene ID" value="ENSMUSG00000036371.7"/>
</dbReference>
<dbReference type="Ensembl" id="ENSMUST00000203077.3">
    <molecule id="Q9CY58-2"/>
    <property type="protein sequence ID" value="ENSMUSP00000144913.2"/>
    <property type="gene ID" value="ENSMUSG00000036371.7"/>
</dbReference>
<dbReference type="Ensembl" id="ENSMUST00000204293.3">
    <molecule id="Q9CY58-3"/>
    <property type="protein sequence ID" value="ENSMUSP00000145472.2"/>
    <property type="gene ID" value="ENSMUSG00000036371.7"/>
</dbReference>
<dbReference type="GeneID" id="66870"/>
<dbReference type="KEGG" id="mmu:66870"/>
<dbReference type="UCSC" id="uc009cfh.1">
    <molecule id="Q9CY58-2"/>
    <property type="organism name" value="mouse"/>
</dbReference>
<dbReference type="UCSC" id="uc009cfi.1">
    <molecule id="Q9CY58-4"/>
    <property type="organism name" value="mouse"/>
</dbReference>
<dbReference type="UCSC" id="uc009cfj.2">
    <molecule id="Q9CY58-1"/>
    <property type="organism name" value="mouse"/>
</dbReference>
<dbReference type="AGR" id="MGI:1914120"/>
<dbReference type="CTD" id="26135"/>
<dbReference type="MGI" id="MGI:1914120">
    <property type="gene designation" value="Serbp1"/>
</dbReference>
<dbReference type="VEuPathDB" id="HostDB:ENSMUSG00000036371"/>
<dbReference type="eggNOG" id="KOG2945">
    <property type="taxonomic scope" value="Eukaryota"/>
</dbReference>
<dbReference type="GeneTree" id="ENSGT00520000055591"/>
<dbReference type="HOGENOM" id="CLU_037366_2_1_1"/>
<dbReference type="InParanoid" id="Q9CY58"/>
<dbReference type="OMA" id="HNWGTIK"/>
<dbReference type="OrthoDB" id="6022699at2759"/>
<dbReference type="PhylomeDB" id="Q9CY58"/>
<dbReference type="TreeFam" id="TF318374"/>
<dbReference type="BioGRID-ORCS" id="66870">
    <property type="hits" value="17 hits in 80 CRISPR screens"/>
</dbReference>
<dbReference type="CD-CODE" id="CE726F99">
    <property type="entry name" value="Postsynaptic density"/>
</dbReference>
<dbReference type="ChiTaRS" id="Serbp1">
    <property type="organism name" value="mouse"/>
</dbReference>
<dbReference type="PRO" id="PR:Q9CY58"/>
<dbReference type="Proteomes" id="UP000000589">
    <property type="component" value="Chromosome 6"/>
</dbReference>
<dbReference type="RNAct" id="Q9CY58">
    <property type="molecule type" value="protein"/>
</dbReference>
<dbReference type="Bgee" id="ENSMUSG00000036371">
    <property type="expression patterns" value="Expressed in primitive streak and 251 other cell types or tissues"/>
</dbReference>
<dbReference type="ExpressionAtlas" id="Q9CY58">
    <property type="expression patterns" value="baseline and differential"/>
</dbReference>
<dbReference type="GO" id="GO:0005737">
    <property type="term" value="C:cytoplasm"/>
    <property type="evidence" value="ECO:0000250"/>
    <property type="project" value="UniProtKB"/>
</dbReference>
<dbReference type="GO" id="GO:0005829">
    <property type="term" value="C:cytosol"/>
    <property type="evidence" value="ECO:0007669"/>
    <property type="project" value="Ensembl"/>
</dbReference>
<dbReference type="GO" id="GO:0005634">
    <property type="term" value="C:nucleus"/>
    <property type="evidence" value="ECO:0000250"/>
    <property type="project" value="UniProtKB"/>
</dbReference>
<dbReference type="GO" id="GO:0048471">
    <property type="term" value="C:perinuclear region of cytoplasm"/>
    <property type="evidence" value="ECO:0007669"/>
    <property type="project" value="UniProtKB-SubCell"/>
</dbReference>
<dbReference type="GO" id="GO:0003730">
    <property type="term" value="F:mRNA 3'-UTR binding"/>
    <property type="evidence" value="ECO:0000250"/>
    <property type="project" value="HGNC-UCL"/>
</dbReference>
<dbReference type="GO" id="GO:0043022">
    <property type="term" value="F:ribosome binding"/>
    <property type="evidence" value="ECO:0000314"/>
    <property type="project" value="UniProtKB"/>
</dbReference>
<dbReference type="GO" id="GO:0032183">
    <property type="term" value="F:SUMO binding"/>
    <property type="evidence" value="ECO:0000250"/>
    <property type="project" value="UniProtKB"/>
</dbReference>
<dbReference type="GO" id="GO:0061770">
    <property type="term" value="F:translation elongation factor binding"/>
    <property type="evidence" value="ECO:0000314"/>
    <property type="project" value="UniProtKB"/>
</dbReference>
<dbReference type="GO" id="GO:0030371">
    <property type="term" value="F:translation repressor activity"/>
    <property type="evidence" value="ECO:0000314"/>
    <property type="project" value="UniProtKB"/>
</dbReference>
<dbReference type="GO" id="GO:0017148">
    <property type="term" value="P:negative regulation of translation"/>
    <property type="evidence" value="ECO:0000314"/>
    <property type="project" value="UniProtKB"/>
</dbReference>
<dbReference type="GO" id="GO:0030578">
    <property type="term" value="P:PML body organization"/>
    <property type="evidence" value="ECO:0000250"/>
    <property type="project" value="UniProtKB"/>
</dbReference>
<dbReference type="GO" id="GO:0141014">
    <property type="term" value="P:ribosome hibernation"/>
    <property type="evidence" value="ECO:0000314"/>
    <property type="project" value="UniProtKB"/>
</dbReference>
<dbReference type="InterPro" id="IPR039764">
    <property type="entry name" value="HABP4/SERBP1-like"/>
</dbReference>
<dbReference type="InterPro" id="IPR006861">
    <property type="entry name" value="HABP4_PAIRBP1-bd"/>
</dbReference>
<dbReference type="InterPro" id="IPR032381">
    <property type="entry name" value="IHABP4_N"/>
</dbReference>
<dbReference type="PANTHER" id="PTHR12299">
    <property type="entry name" value="HYALURONIC ACID-BINDING PROTEIN 4"/>
    <property type="match status" value="1"/>
</dbReference>
<dbReference type="PANTHER" id="PTHR12299:SF29">
    <property type="entry name" value="SERPINE1 MRNA-BINDING PROTEIN 1"/>
    <property type="match status" value="1"/>
</dbReference>
<dbReference type="Pfam" id="PF04774">
    <property type="entry name" value="HABP4_PAI-RBP1"/>
    <property type="match status" value="1"/>
</dbReference>
<dbReference type="Pfam" id="PF16174">
    <property type="entry name" value="IHABP4_N"/>
    <property type="match status" value="1"/>
</dbReference>
<dbReference type="SMART" id="SM01233">
    <property type="entry name" value="HABP4_PAI-RBP1"/>
    <property type="match status" value="1"/>
</dbReference>
<organism>
    <name type="scientific">Mus musculus</name>
    <name type="common">Mouse</name>
    <dbReference type="NCBI Taxonomy" id="10090"/>
    <lineage>
        <taxon>Eukaryota</taxon>
        <taxon>Metazoa</taxon>
        <taxon>Chordata</taxon>
        <taxon>Craniata</taxon>
        <taxon>Vertebrata</taxon>
        <taxon>Euteleostomi</taxon>
        <taxon>Mammalia</taxon>
        <taxon>Eutheria</taxon>
        <taxon>Euarchontoglires</taxon>
        <taxon>Glires</taxon>
        <taxon>Rodentia</taxon>
        <taxon>Myomorpha</taxon>
        <taxon>Muroidea</taxon>
        <taxon>Muridae</taxon>
        <taxon>Murinae</taxon>
        <taxon>Mus</taxon>
        <taxon>Mus</taxon>
    </lineage>
</organism>
<sequence>MPGHLQEGFGCVVTNRFDQLFDDESDPFEVLKAAENKKKEAGGGGVGGPGAKSAAQAAAQTNSNAAGKQLRKESQKDRKNPLPPSVGVADKKEETQPPVALKKEGIRRVGRRPDQQLQGDGKLIDRRAERRPPRERRFEKPLEEKGEGGEFSVDRPIIERPIRGRGGLGRGRGGRGRGMGRGDGFDSRGKREFDRHSGSDRSSFSHYSGLKHEDKRGGSGSHNWGTVKDELTESPKYIQKQISYNCSDLDQSNVTEETPEGEEHPVADTENKENEVEEVKEEGPKEMTLDEWKAIQNKDRAKVEFNIRKPNEGADGQWKKGFVLHKSKSEEAHAEDSVMDHHFRKPANDITSQLEINFGDLGRPGRGGRGGRGGRGRGGRPNRGSRTDKSSASAPDVDDPEAFPALA</sequence>
<proteinExistence type="evidence at protein level"/>
<accession>Q9CY58</accession>
<accession>Q8BHS2</accession>
<accession>Q8BHU0</accession>
<accession>Q91WP3</accession>
<accession>Q9CSN0</accession>
<accession>Q9DBY6</accession>
<comment type="function">
    <text evidence="2 5">Ribosome-binding protein that promotes ribosome hibernation, a process during which ribosomes are stabilized in an inactive state and preserved from proteasomal degradation (PubMed:34815424). Acts via its association with EEF2/eEF2 factor, sequestering EEF2/eEF2 at the A-site of the ribosome and promoting ribosome stabilization and storage in an inactive state (PubMed:34815424). May also play a role in the regulation of mRNA stability: binds to the 3'-most 134 nt of the SERPINE1/PAI1 mRNA, a region which confers cyclic nucleotide regulation of message decay (By similarity). Seems to play a role in PML-nuclear bodies formation (By similarity).</text>
</comment>
<comment type="subunit">
    <text evidence="2 4 5">Associates with mature 80S ribosomes (PubMed:34815424). Interacts with EEF2/eEF2; interaction sequesters EEF2/eEF2 at the A-site of the ribosome, thereby blocking the interaction sites of the mRNA-tRNA complex, promoting ribosome stabilization and hibernation (PubMed:34815424). Interacts with SPIN1 (PubMed:23894536). Interacts with CHD3 and TDRD3. Interacts with ZDHHC17 (via ANK repeats) (By similarity).</text>
</comment>
<comment type="subcellular location">
    <subcellularLocation>
        <location evidence="2">Cytoplasm</location>
    </subcellularLocation>
    <subcellularLocation>
        <location evidence="2">Nucleus</location>
    </subcellularLocation>
    <subcellularLocation>
        <location evidence="2">Cytoplasm</location>
        <location evidence="2">Perinuclear region</location>
    </subcellularLocation>
</comment>
<comment type="alternative products">
    <event type="alternative splicing"/>
    <isoform>
        <id>Q9CY58-1</id>
        <name>1</name>
        <sequence type="displayed"/>
    </isoform>
    <isoform>
        <id>Q9CY58-2</id>
        <name>2</name>
        <sequence type="described" ref="VSP_011633"/>
    </isoform>
    <isoform>
        <id>Q9CY58-3</id>
        <name>3</name>
        <sequence type="described" ref="VSP_011632 VSP_011633"/>
    </isoform>
    <isoform>
        <id>Q9CY58-4</id>
        <name>4</name>
        <sequence type="described" ref="VSP_011634 VSP_011635"/>
    </isoform>
</comment>
<comment type="PTM">
    <text evidence="2">Phosphorylation by MTOR inhibits SERBP1 and relieves ribosome hibernation.</text>
</comment>
<comment type="miscellaneous">
    <molecule>Isoform 4</molecule>
    <text evidence="9">May be due to intron retention.</text>
</comment>
<comment type="similarity">
    <text evidence="9">Belongs to the SERBP1-HABP4 family.</text>
</comment>